<accession>Q99LQ1</accession>
<accession>Q3TBM3</accession>
<organism>
    <name type="scientific">Mus musculus</name>
    <name type="common">Mouse</name>
    <dbReference type="NCBI Taxonomy" id="10090"/>
    <lineage>
        <taxon>Eukaryota</taxon>
        <taxon>Metazoa</taxon>
        <taxon>Chordata</taxon>
        <taxon>Craniata</taxon>
        <taxon>Vertebrata</taxon>
        <taxon>Euteleostomi</taxon>
        <taxon>Mammalia</taxon>
        <taxon>Eutheria</taxon>
        <taxon>Euarchontoglires</taxon>
        <taxon>Glires</taxon>
        <taxon>Rodentia</taxon>
        <taxon>Myomorpha</taxon>
        <taxon>Muroidea</taxon>
        <taxon>Muridae</taxon>
        <taxon>Murinae</taxon>
        <taxon>Mus</taxon>
        <taxon>Mus</taxon>
    </lineage>
</organism>
<gene>
    <name type="primary">Mbip</name>
</gene>
<name>MBIP1_MOUSE</name>
<feature type="chain" id="PRO_0000096270" description="MAP3K12-binding inhibitory protein 1">
    <location>
        <begin position="1"/>
        <end position="341"/>
    </location>
</feature>
<feature type="region of interest" description="Interaction with MAP3K12">
    <location>
        <begin position="170"/>
        <end position="341"/>
    </location>
</feature>
<feature type="region of interest" description="Leucine-zipper 1" evidence="3">
    <location>
        <begin position="269"/>
        <end position="283"/>
    </location>
</feature>
<feature type="region of interest" description="Leucine-zipper 2" evidence="3">
    <location>
        <begin position="312"/>
        <end position="327"/>
    </location>
</feature>
<feature type="modified residue" description="Phosphoserine" evidence="2">
    <location>
        <position position="91"/>
    </location>
</feature>
<feature type="modified residue" description="N6-acetyllysine; alternate" evidence="4">
    <location>
        <position position="299"/>
    </location>
</feature>
<feature type="cross-link" description="Glycyl lysine isopeptide (Lys-Gly) (interchain with G-Cter in SUMO2)" evidence="2">
    <location>
        <position position="94"/>
    </location>
</feature>
<feature type="cross-link" description="Glycyl lysine isopeptide (Lys-Gly) (interchain with G-Cter in SUMO2)" evidence="2">
    <location>
        <position position="127"/>
    </location>
</feature>
<feature type="cross-link" description="Glycyl lysine isopeptide (Lys-Gly) (interchain with G-Cter in SUMO2)" evidence="2">
    <location>
        <position position="137"/>
    </location>
</feature>
<feature type="cross-link" description="Glycyl lysine isopeptide (Lys-Gly) (interchain with G-Cter in SUMO2)" evidence="2">
    <location>
        <position position="151"/>
    </location>
</feature>
<feature type="cross-link" description="Glycyl lysine isopeptide (Lys-Gly) (interchain with G-Cter in SUMO2)" evidence="2">
    <location>
        <position position="233"/>
    </location>
</feature>
<feature type="cross-link" description="Glycyl lysine isopeptide (Lys-Gly) (interchain with G-Cter in SUMO2); alternate" evidence="2">
    <location>
        <position position="299"/>
    </location>
</feature>
<feature type="cross-link" description="Glycyl lysine isopeptide (Lys-Gly) (interchain with G-Cter in SUMO2)" evidence="2">
    <location>
        <position position="302"/>
    </location>
</feature>
<feature type="cross-link" description="Glycyl lysine isopeptide (Lys-Gly) (interchain with G-Cter in SUMO2)" evidence="2">
    <location>
        <position position="323"/>
    </location>
</feature>
<proteinExistence type="evidence at protein level"/>
<evidence type="ECO:0000250" key="1"/>
<evidence type="ECO:0000250" key="2">
    <source>
        <dbReference type="UniProtKB" id="Q9NS73"/>
    </source>
</evidence>
<evidence type="ECO:0000255" key="3"/>
<evidence type="ECO:0007744" key="4">
    <source>
    </source>
</evidence>
<comment type="function">
    <text evidence="1">Inhibits the MAP3K12 activity to induce the activation of the JNK/SAPK pathway. Component of the ATAC complex, a complex with histone acetyltransferase activity on histones H3 and H4.</text>
</comment>
<comment type="subunit">
    <text evidence="1">Component of the ADA2A-containing complex (ATAC), composed of KAT14, KAT2A, TADA2L, TADA3L, ZZ3, MBIP, WDR5, YEATS2, CCDC101 and DR1. In the complex, it probably interacts directly with KAT2A, KAT14 and WDR5.</text>
</comment>
<comment type="subcellular location">
    <subcellularLocation>
        <location evidence="1">Nucleus</location>
    </subcellularLocation>
    <subcellularLocation>
        <location evidence="1">Cytoplasm</location>
    </subcellularLocation>
    <text evidence="1">Shows a cytoplasmic localization when co-expressed with MAP3K12.</text>
</comment>
<dbReference type="EMBL" id="AK077125">
    <property type="protein sequence ID" value="BAC36628.1"/>
    <property type="molecule type" value="mRNA"/>
</dbReference>
<dbReference type="EMBL" id="AK154318">
    <property type="protein sequence ID" value="BAE32511.1"/>
    <property type="molecule type" value="mRNA"/>
</dbReference>
<dbReference type="EMBL" id="AK171164">
    <property type="protein sequence ID" value="BAE42286.1"/>
    <property type="molecule type" value="mRNA"/>
</dbReference>
<dbReference type="EMBL" id="BC002277">
    <property type="protein sequence ID" value="AAH02277.1"/>
    <property type="molecule type" value="mRNA"/>
</dbReference>
<dbReference type="CCDS" id="CCDS25920.1"/>
<dbReference type="RefSeq" id="NP_663417.1">
    <property type="nucleotide sequence ID" value="NM_145442.2"/>
</dbReference>
<dbReference type="SMR" id="Q99LQ1"/>
<dbReference type="BioGRID" id="229926">
    <property type="interactions" value="3"/>
</dbReference>
<dbReference type="ComplexPortal" id="CPX-1025">
    <property type="entry name" value="GCN5-containing ATAC complex"/>
</dbReference>
<dbReference type="ComplexPortal" id="CPX-1029">
    <property type="entry name" value="PCAF-containing ATAC complex"/>
</dbReference>
<dbReference type="FunCoup" id="Q99LQ1">
    <property type="interactions" value="3473"/>
</dbReference>
<dbReference type="IntAct" id="Q99LQ1">
    <property type="interactions" value="4"/>
</dbReference>
<dbReference type="MINT" id="Q99LQ1"/>
<dbReference type="STRING" id="10090.ENSMUSP00000021416"/>
<dbReference type="iPTMnet" id="Q99LQ1"/>
<dbReference type="PhosphoSitePlus" id="Q99LQ1"/>
<dbReference type="jPOST" id="Q99LQ1"/>
<dbReference type="PaxDb" id="10090-ENSMUSP00000021416"/>
<dbReference type="PeptideAtlas" id="Q99LQ1"/>
<dbReference type="ProteomicsDB" id="287320"/>
<dbReference type="Pumba" id="Q99LQ1"/>
<dbReference type="Antibodypedia" id="166">
    <property type="antibodies" value="142 antibodies from 26 providers"/>
</dbReference>
<dbReference type="DNASU" id="217588"/>
<dbReference type="Ensembl" id="ENSMUST00000021416.9">
    <property type="protein sequence ID" value="ENSMUSP00000021416.8"/>
    <property type="gene ID" value="ENSMUSG00000021028.9"/>
</dbReference>
<dbReference type="GeneID" id="217588"/>
<dbReference type="KEGG" id="mmu:217588"/>
<dbReference type="UCSC" id="uc007npc.2">
    <property type="organism name" value="mouse"/>
</dbReference>
<dbReference type="AGR" id="MGI:1918320"/>
<dbReference type="CTD" id="51562"/>
<dbReference type="MGI" id="MGI:1918320">
    <property type="gene designation" value="Mbip"/>
</dbReference>
<dbReference type="VEuPathDB" id="HostDB:ENSMUSG00000021028"/>
<dbReference type="eggNOG" id="ENOG502R8QG">
    <property type="taxonomic scope" value="Eukaryota"/>
</dbReference>
<dbReference type="GeneTree" id="ENSGT00510000047831"/>
<dbReference type="HOGENOM" id="CLU_069631_0_0_1"/>
<dbReference type="InParanoid" id="Q99LQ1"/>
<dbReference type="OMA" id="HKSNSML"/>
<dbReference type="OrthoDB" id="5531344at2759"/>
<dbReference type="PhylomeDB" id="Q99LQ1"/>
<dbReference type="TreeFam" id="TF331763"/>
<dbReference type="Reactome" id="R-MMU-9772755">
    <property type="pathway name" value="Formation of WDR5-containing histone-modifying complexes"/>
</dbReference>
<dbReference type="BioGRID-ORCS" id="217588">
    <property type="hits" value="7 hits in 81 CRISPR screens"/>
</dbReference>
<dbReference type="ChiTaRS" id="Mbip">
    <property type="organism name" value="mouse"/>
</dbReference>
<dbReference type="PRO" id="PR:Q99LQ1"/>
<dbReference type="Proteomes" id="UP000000589">
    <property type="component" value="Chromosome 12"/>
</dbReference>
<dbReference type="RNAct" id="Q99LQ1">
    <property type="molecule type" value="protein"/>
</dbReference>
<dbReference type="Bgee" id="ENSMUSG00000021028">
    <property type="expression patterns" value="Expressed in humerus cartilage element and 259 other cell types or tissues"/>
</dbReference>
<dbReference type="ExpressionAtlas" id="Q99LQ1">
    <property type="expression patterns" value="baseline and differential"/>
</dbReference>
<dbReference type="GO" id="GO:0140672">
    <property type="term" value="C:ATAC complex"/>
    <property type="evidence" value="ECO:0000314"/>
    <property type="project" value="MGI"/>
</dbReference>
<dbReference type="GO" id="GO:0005829">
    <property type="term" value="C:cytosol"/>
    <property type="evidence" value="ECO:0007669"/>
    <property type="project" value="Ensembl"/>
</dbReference>
<dbReference type="GO" id="GO:0072686">
    <property type="term" value="C:mitotic spindle"/>
    <property type="evidence" value="ECO:0000303"/>
    <property type="project" value="ComplexPortal"/>
</dbReference>
<dbReference type="GO" id="GO:0005730">
    <property type="term" value="C:nucleolus"/>
    <property type="evidence" value="ECO:0007669"/>
    <property type="project" value="Ensembl"/>
</dbReference>
<dbReference type="GO" id="GO:0005654">
    <property type="term" value="C:nucleoplasm"/>
    <property type="evidence" value="ECO:0007669"/>
    <property type="project" value="Ensembl"/>
</dbReference>
<dbReference type="GO" id="GO:0005634">
    <property type="term" value="C:nucleus"/>
    <property type="evidence" value="ECO:0000314"/>
    <property type="project" value="MGI"/>
</dbReference>
<dbReference type="GO" id="GO:0042802">
    <property type="term" value="F:identical protein binding"/>
    <property type="evidence" value="ECO:0007669"/>
    <property type="project" value="Ensembl"/>
</dbReference>
<dbReference type="GO" id="GO:0004860">
    <property type="term" value="F:protein kinase inhibitor activity"/>
    <property type="evidence" value="ECO:0007669"/>
    <property type="project" value="Ensembl"/>
</dbReference>
<dbReference type="GO" id="GO:0000122">
    <property type="term" value="P:negative regulation of transcription by RNA polymerase II"/>
    <property type="evidence" value="ECO:0007669"/>
    <property type="project" value="Ensembl"/>
</dbReference>
<dbReference type="GO" id="GO:0010628">
    <property type="term" value="P:positive regulation of gene expression"/>
    <property type="evidence" value="ECO:0007669"/>
    <property type="project" value="Ensembl"/>
</dbReference>
<dbReference type="GO" id="GO:0046330">
    <property type="term" value="P:positive regulation of JNK cascade"/>
    <property type="evidence" value="ECO:0007669"/>
    <property type="project" value="Ensembl"/>
</dbReference>
<dbReference type="GO" id="GO:0051726">
    <property type="term" value="P:regulation of cell cycle"/>
    <property type="evidence" value="ECO:0000315"/>
    <property type="project" value="ComplexPortal"/>
</dbReference>
<dbReference type="GO" id="GO:0051302">
    <property type="term" value="P:regulation of cell division"/>
    <property type="evidence" value="ECO:0000314"/>
    <property type="project" value="ComplexPortal"/>
</dbReference>
<dbReference type="GO" id="GO:0006355">
    <property type="term" value="P:regulation of DNA-templated transcription"/>
    <property type="evidence" value="ECO:0000266"/>
    <property type="project" value="ComplexPortal"/>
</dbReference>
<dbReference type="GO" id="GO:0045995">
    <property type="term" value="P:regulation of embryonic development"/>
    <property type="evidence" value="ECO:0000314"/>
    <property type="project" value="ComplexPortal"/>
</dbReference>
<dbReference type="GO" id="GO:0006357">
    <property type="term" value="P:regulation of transcription by RNA polymerase II"/>
    <property type="evidence" value="ECO:0000266"/>
    <property type="project" value="ComplexPortal"/>
</dbReference>
<dbReference type="PANTHER" id="PTHR23404">
    <property type="entry name" value="MOLYBDOPTERIN SYNTHASE RELATED"/>
    <property type="match status" value="1"/>
</dbReference>
<keyword id="KW-0007">Acetylation</keyword>
<keyword id="KW-0963">Cytoplasm</keyword>
<keyword id="KW-1017">Isopeptide bond</keyword>
<keyword id="KW-0539">Nucleus</keyword>
<keyword id="KW-0597">Phosphoprotein</keyword>
<keyword id="KW-1185">Reference proteome</keyword>
<keyword id="KW-0677">Repeat</keyword>
<keyword id="KW-0832">Ubl conjugation</keyword>
<protein>
    <recommendedName>
        <fullName>MAP3K12-binding inhibitory protein 1</fullName>
    </recommendedName>
    <alternativeName>
        <fullName>MAPK upstream kinase-binding inhibitory protein</fullName>
        <shortName>MUK-binding inhibitory protein</shortName>
    </alternativeName>
</protein>
<sequence>MAAAAELSSSSGSERSLEQCSSPLLTREVLCEVFRSLHTLTRQLNLRDDVVKITIDWNRLQSLSASQPALLLTALEQHVLYLQPFLAKLQSLMKENSTATEIRQTEAETKSELRAIHPTEDLQDEGKPKDCDVGDVKKTQNLFDPEVVQIKAGKAEIDRRISAFIERKQAEINENNVREFCNVIDCNQENSCARTDAVFTPYPGFKSHVKVSRVVNTYGPQTRPEGIAGSGHKPTGMLRDCGNQAVEERLQNIEAHLRLQTGGPVPRDIYQRIKKLEDKILELEGISPEYFQSVNFSGKRRKVQPPQQNYSLAELDEKISALKRALLRKSREADSMAAHLP</sequence>
<reference key="1">
    <citation type="journal article" date="2005" name="Science">
        <title>The transcriptional landscape of the mammalian genome.</title>
        <authorList>
            <person name="Carninci P."/>
            <person name="Kasukawa T."/>
            <person name="Katayama S."/>
            <person name="Gough J."/>
            <person name="Frith M.C."/>
            <person name="Maeda N."/>
            <person name="Oyama R."/>
            <person name="Ravasi T."/>
            <person name="Lenhard B."/>
            <person name="Wells C."/>
            <person name="Kodzius R."/>
            <person name="Shimokawa K."/>
            <person name="Bajic V.B."/>
            <person name="Brenner S.E."/>
            <person name="Batalov S."/>
            <person name="Forrest A.R."/>
            <person name="Zavolan M."/>
            <person name="Davis M.J."/>
            <person name="Wilming L.G."/>
            <person name="Aidinis V."/>
            <person name="Allen J.E."/>
            <person name="Ambesi-Impiombato A."/>
            <person name="Apweiler R."/>
            <person name="Aturaliya R.N."/>
            <person name="Bailey T.L."/>
            <person name="Bansal M."/>
            <person name="Baxter L."/>
            <person name="Beisel K.W."/>
            <person name="Bersano T."/>
            <person name="Bono H."/>
            <person name="Chalk A.M."/>
            <person name="Chiu K.P."/>
            <person name="Choudhary V."/>
            <person name="Christoffels A."/>
            <person name="Clutterbuck D.R."/>
            <person name="Crowe M.L."/>
            <person name="Dalla E."/>
            <person name="Dalrymple B.P."/>
            <person name="de Bono B."/>
            <person name="Della Gatta G."/>
            <person name="di Bernardo D."/>
            <person name="Down T."/>
            <person name="Engstrom P."/>
            <person name="Fagiolini M."/>
            <person name="Faulkner G."/>
            <person name="Fletcher C.F."/>
            <person name="Fukushima T."/>
            <person name="Furuno M."/>
            <person name="Futaki S."/>
            <person name="Gariboldi M."/>
            <person name="Georgii-Hemming P."/>
            <person name="Gingeras T.R."/>
            <person name="Gojobori T."/>
            <person name="Green R.E."/>
            <person name="Gustincich S."/>
            <person name="Harbers M."/>
            <person name="Hayashi Y."/>
            <person name="Hensch T.K."/>
            <person name="Hirokawa N."/>
            <person name="Hill D."/>
            <person name="Huminiecki L."/>
            <person name="Iacono M."/>
            <person name="Ikeo K."/>
            <person name="Iwama A."/>
            <person name="Ishikawa T."/>
            <person name="Jakt M."/>
            <person name="Kanapin A."/>
            <person name="Katoh M."/>
            <person name="Kawasawa Y."/>
            <person name="Kelso J."/>
            <person name="Kitamura H."/>
            <person name="Kitano H."/>
            <person name="Kollias G."/>
            <person name="Krishnan S.P."/>
            <person name="Kruger A."/>
            <person name="Kummerfeld S.K."/>
            <person name="Kurochkin I.V."/>
            <person name="Lareau L.F."/>
            <person name="Lazarevic D."/>
            <person name="Lipovich L."/>
            <person name="Liu J."/>
            <person name="Liuni S."/>
            <person name="McWilliam S."/>
            <person name="Madan Babu M."/>
            <person name="Madera M."/>
            <person name="Marchionni L."/>
            <person name="Matsuda H."/>
            <person name="Matsuzawa S."/>
            <person name="Miki H."/>
            <person name="Mignone F."/>
            <person name="Miyake S."/>
            <person name="Morris K."/>
            <person name="Mottagui-Tabar S."/>
            <person name="Mulder N."/>
            <person name="Nakano N."/>
            <person name="Nakauchi H."/>
            <person name="Ng P."/>
            <person name="Nilsson R."/>
            <person name="Nishiguchi S."/>
            <person name="Nishikawa S."/>
            <person name="Nori F."/>
            <person name="Ohara O."/>
            <person name="Okazaki Y."/>
            <person name="Orlando V."/>
            <person name="Pang K.C."/>
            <person name="Pavan W.J."/>
            <person name="Pavesi G."/>
            <person name="Pesole G."/>
            <person name="Petrovsky N."/>
            <person name="Piazza S."/>
            <person name="Reed J."/>
            <person name="Reid J.F."/>
            <person name="Ring B.Z."/>
            <person name="Ringwald M."/>
            <person name="Rost B."/>
            <person name="Ruan Y."/>
            <person name="Salzberg S.L."/>
            <person name="Sandelin A."/>
            <person name="Schneider C."/>
            <person name="Schoenbach C."/>
            <person name="Sekiguchi K."/>
            <person name="Semple C.A."/>
            <person name="Seno S."/>
            <person name="Sessa L."/>
            <person name="Sheng Y."/>
            <person name="Shibata Y."/>
            <person name="Shimada H."/>
            <person name="Shimada K."/>
            <person name="Silva D."/>
            <person name="Sinclair B."/>
            <person name="Sperling S."/>
            <person name="Stupka E."/>
            <person name="Sugiura K."/>
            <person name="Sultana R."/>
            <person name="Takenaka Y."/>
            <person name="Taki K."/>
            <person name="Tammoja K."/>
            <person name="Tan S.L."/>
            <person name="Tang S."/>
            <person name="Taylor M.S."/>
            <person name="Tegner J."/>
            <person name="Teichmann S.A."/>
            <person name="Ueda H.R."/>
            <person name="van Nimwegen E."/>
            <person name="Verardo R."/>
            <person name="Wei C.L."/>
            <person name="Yagi K."/>
            <person name="Yamanishi H."/>
            <person name="Zabarovsky E."/>
            <person name="Zhu S."/>
            <person name="Zimmer A."/>
            <person name="Hide W."/>
            <person name="Bult C."/>
            <person name="Grimmond S.M."/>
            <person name="Teasdale R.D."/>
            <person name="Liu E.T."/>
            <person name="Brusic V."/>
            <person name="Quackenbush J."/>
            <person name="Wahlestedt C."/>
            <person name="Mattick J.S."/>
            <person name="Hume D.A."/>
            <person name="Kai C."/>
            <person name="Sasaki D."/>
            <person name="Tomaru Y."/>
            <person name="Fukuda S."/>
            <person name="Kanamori-Katayama M."/>
            <person name="Suzuki M."/>
            <person name="Aoki J."/>
            <person name="Arakawa T."/>
            <person name="Iida J."/>
            <person name="Imamura K."/>
            <person name="Itoh M."/>
            <person name="Kato T."/>
            <person name="Kawaji H."/>
            <person name="Kawagashira N."/>
            <person name="Kawashima T."/>
            <person name="Kojima M."/>
            <person name="Kondo S."/>
            <person name="Konno H."/>
            <person name="Nakano K."/>
            <person name="Ninomiya N."/>
            <person name="Nishio T."/>
            <person name="Okada M."/>
            <person name="Plessy C."/>
            <person name="Shibata K."/>
            <person name="Shiraki T."/>
            <person name="Suzuki S."/>
            <person name="Tagami M."/>
            <person name="Waki K."/>
            <person name="Watahiki A."/>
            <person name="Okamura-Oho Y."/>
            <person name="Suzuki H."/>
            <person name="Kawai J."/>
            <person name="Hayashizaki Y."/>
        </authorList>
    </citation>
    <scope>NUCLEOTIDE SEQUENCE [LARGE SCALE MRNA]</scope>
    <source>
        <strain>C57BL/6J</strain>
        <strain>NOD</strain>
        <tissue>Testis</tissue>
    </source>
</reference>
<reference key="2">
    <citation type="journal article" date="2004" name="Genome Res.">
        <title>The status, quality, and expansion of the NIH full-length cDNA project: the Mammalian Gene Collection (MGC).</title>
        <authorList>
            <consortium name="The MGC Project Team"/>
        </authorList>
    </citation>
    <scope>NUCLEOTIDE SEQUENCE [LARGE SCALE MRNA]</scope>
</reference>
<reference key="3">
    <citation type="journal article" date="2013" name="Mol. Cell">
        <title>SIRT5-mediated lysine desuccinylation impacts diverse metabolic pathways.</title>
        <authorList>
            <person name="Park J."/>
            <person name="Chen Y."/>
            <person name="Tishkoff D.X."/>
            <person name="Peng C."/>
            <person name="Tan M."/>
            <person name="Dai L."/>
            <person name="Xie Z."/>
            <person name="Zhang Y."/>
            <person name="Zwaans B.M."/>
            <person name="Skinner M.E."/>
            <person name="Lombard D.B."/>
            <person name="Zhao Y."/>
        </authorList>
    </citation>
    <scope>ACETYLATION [LARGE SCALE ANALYSIS] AT LYS-299</scope>
    <scope>IDENTIFICATION BY MASS SPECTROMETRY [LARGE SCALE ANALYSIS]</scope>
    <source>
        <tissue>Embryonic fibroblast</tissue>
    </source>
</reference>